<sequence>MANPIKIGIGGPVGAGKTQLIEKVVKRLSKEMSIGVITNDIYTKEDEKILVNSGVLPESRIIGVETGGCPHTAIREDASMNFAAIDELLERHDDIELIFIESGGDNLAATFSPELVDFSIYIIDVAQGEKIPRKGGQGMIKSDFFVINKTDLAPYVGASLEQMAEDTKVFRGKRPFTFTNLKTDEGLDEVIDWIERDTLLKGLS</sequence>
<organism>
    <name type="scientific">Staphylococcus aureus (strain JH1)</name>
    <dbReference type="NCBI Taxonomy" id="359787"/>
    <lineage>
        <taxon>Bacteria</taxon>
        <taxon>Bacillati</taxon>
        <taxon>Bacillota</taxon>
        <taxon>Bacilli</taxon>
        <taxon>Bacillales</taxon>
        <taxon>Staphylococcaceae</taxon>
        <taxon>Staphylococcus</taxon>
    </lineage>
</organism>
<accession>A6U417</accession>
<keyword id="KW-0143">Chaperone</keyword>
<keyword id="KW-0963">Cytoplasm</keyword>
<keyword id="KW-0342">GTP-binding</keyword>
<keyword id="KW-0996">Nickel insertion</keyword>
<keyword id="KW-0547">Nucleotide-binding</keyword>
<protein>
    <recommendedName>
        <fullName evidence="1">Urease accessory protein UreG</fullName>
    </recommendedName>
</protein>
<name>UREG_STAA2</name>
<dbReference type="EMBL" id="CP000736">
    <property type="protein sequence ID" value="ABR53185.1"/>
    <property type="molecule type" value="Genomic_DNA"/>
</dbReference>
<dbReference type="SMR" id="A6U417"/>
<dbReference type="KEGG" id="sah:SaurJH1_2360"/>
<dbReference type="HOGENOM" id="CLU_072144_1_0_9"/>
<dbReference type="GO" id="GO:0005737">
    <property type="term" value="C:cytoplasm"/>
    <property type="evidence" value="ECO:0007669"/>
    <property type="project" value="UniProtKB-SubCell"/>
</dbReference>
<dbReference type="GO" id="GO:0005525">
    <property type="term" value="F:GTP binding"/>
    <property type="evidence" value="ECO:0007669"/>
    <property type="project" value="UniProtKB-KW"/>
</dbReference>
<dbReference type="GO" id="GO:0003924">
    <property type="term" value="F:GTPase activity"/>
    <property type="evidence" value="ECO:0007669"/>
    <property type="project" value="InterPro"/>
</dbReference>
<dbReference type="GO" id="GO:0016151">
    <property type="term" value="F:nickel cation binding"/>
    <property type="evidence" value="ECO:0007669"/>
    <property type="project" value="UniProtKB-UniRule"/>
</dbReference>
<dbReference type="GO" id="GO:0043419">
    <property type="term" value="P:urea catabolic process"/>
    <property type="evidence" value="ECO:0007669"/>
    <property type="project" value="InterPro"/>
</dbReference>
<dbReference type="CDD" id="cd05540">
    <property type="entry name" value="UreG"/>
    <property type="match status" value="1"/>
</dbReference>
<dbReference type="Gene3D" id="3.40.50.300">
    <property type="entry name" value="P-loop containing nucleotide triphosphate hydrolases"/>
    <property type="match status" value="1"/>
</dbReference>
<dbReference type="HAMAP" id="MF_01389">
    <property type="entry name" value="UreG"/>
    <property type="match status" value="1"/>
</dbReference>
<dbReference type="InterPro" id="IPR003495">
    <property type="entry name" value="CobW/HypB/UreG_nucleotide-bd"/>
</dbReference>
<dbReference type="InterPro" id="IPR027417">
    <property type="entry name" value="P-loop_NTPase"/>
</dbReference>
<dbReference type="InterPro" id="IPR004400">
    <property type="entry name" value="UreG"/>
</dbReference>
<dbReference type="NCBIfam" id="TIGR00101">
    <property type="entry name" value="ureG"/>
    <property type="match status" value="1"/>
</dbReference>
<dbReference type="PANTHER" id="PTHR31715">
    <property type="entry name" value="UREASE ACCESSORY PROTEIN G"/>
    <property type="match status" value="1"/>
</dbReference>
<dbReference type="PANTHER" id="PTHR31715:SF0">
    <property type="entry name" value="UREASE ACCESSORY PROTEIN G"/>
    <property type="match status" value="1"/>
</dbReference>
<dbReference type="Pfam" id="PF02492">
    <property type="entry name" value="cobW"/>
    <property type="match status" value="1"/>
</dbReference>
<dbReference type="PIRSF" id="PIRSF005624">
    <property type="entry name" value="Ni-bind_GTPase"/>
    <property type="match status" value="1"/>
</dbReference>
<dbReference type="SUPFAM" id="SSF52540">
    <property type="entry name" value="P-loop containing nucleoside triphosphate hydrolases"/>
    <property type="match status" value="1"/>
</dbReference>
<proteinExistence type="inferred from homology"/>
<reference key="1">
    <citation type="submission" date="2007-06" db="EMBL/GenBank/DDBJ databases">
        <title>Complete sequence of chromosome of Staphylococcus aureus subsp. aureus JH1.</title>
        <authorList>
            <consortium name="US DOE Joint Genome Institute"/>
            <person name="Copeland A."/>
            <person name="Lucas S."/>
            <person name="Lapidus A."/>
            <person name="Barry K."/>
            <person name="Detter J.C."/>
            <person name="Glavina del Rio T."/>
            <person name="Hammon N."/>
            <person name="Israni S."/>
            <person name="Dalin E."/>
            <person name="Tice H."/>
            <person name="Pitluck S."/>
            <person name="Chain P."/>
            <person name="Malfatti S."/>
            <person name="Shin M."/>
            <person name="Vergez L."/>
            <person name="Schmutz J."/>
            <person name="Larimer F."/>
            <person name="Land M."/>
            <person name="Hauser L."/>
            <person name="Kyrpides N."/>
            <person name="Ivanova N."/>
            <person name="Tomasz A."/>
            <person name="Richardson P."/>
        </authorList>
    </citation>
    <scope>NUCLEOTIDE SEQUENCE [LARGE SCALE GENOMIC DNA]</scope>
    <source>
        <strain>JH1</strain>
    </source>
</reference>
<feature type="chain" id="PRO_1000145223" description="Urease accessory protein UreG">
    <location>
        <begin position="1"/>
        <end position="204"/>
    </location>
</feature>
<feature type="binding site" evidence="1">
    <location>
        <begin position="11"/>
        <end position="18"/>
    </location>
    <ligand>
        <name>GTP</name>
        <dbReference type="ChEBI" id="CHEBI:37565"/>
    </ligand>
</feature>
<gene>
    <name evidence="1" type="primary">ureG</name>
    <name type="ordered locus">SaurJH1_2360</name>
</gene>
<comment type="function">
    <text evidence="1">Facilitates the functional incorporation of the urease nickel metallocenter. This process requires GTP hydrolysis, probably effectuated by UreG.</text>
</comment>
<comment type="subunit">
    <text evidence="1">Homodimer. UreD, UreF and UreG form a complex that acts as a GTP-hydrolysis-dependent molecular chaperone, activating the urease apoprotein by helping to assemble the nickel containing metallocenter of UreC. The UreE protein probably delivers the nickel.</text>
</comment>
<comment type="subcellular location">
    <subcellularLocation>
        <location evidence="1">Cytoplasm</location>
    </subcellularLocation>
</comment>
<comment type="similarity">
    <text evidence="1">Belongs to the SIMIBI class G3E GTPase family. UreG subfamily.</text>
</comment>
<evidence type="ECO:0000255" key="1">
    <source>
        <dbReference type="HAMAP-Rule" id="MF_01389"/>
    </source>
</evidence>